<accession>P59119</accession>
<evidence type="ECO:0000250" key="1"/>
<evidence type="ECO:0000255" key="2"/>
<evidence type="ECO:0000305" key="3"/>
<keyword id="KW-0028">Amino-acid biosynthesis</keyword>
<keyword id="KW-0963">Cytoplasm</keyword>
<keyword id="KW-0368">Histidine biosynthesis</keyword>
<keyword id="KW-0456">Lyase</keyword>
<keyword id="KW-1185">Reference proteome</keyword>
<dbReference type="EC" id="4.3.2.10"/>
<dbReference type="EMBL" id="AE010300">
    <property type="protein sequence ID" value="AAN49705.1"/>
    <property type="molecule type" value="Genomic_DNA"/>
</dbReference>
<dbReference type="RefSeq" id="NP_712687.1">
    <property type="nucleotide sequence ID" value="NC_004342.2"/>
</dbReference>
<dbReference type="RefSeq" id="WP_000067921.1">
    <property type="nucleotide sequence ID" value="NC_004342.2"/>
</dbReference>
<dbReference type="SMR" id="P59119"/>
<dbReference type="FunCoup" id="P59119">
    <property type="interactions" value="502"/>
</dbReference>
<dbReference type="STRING" id="189518.LA_2506"/>
<dbReference type="PaxDb" id="189518-LA_2506"/>
<dbReference type="EnsemblBacteria" id="AAN49705">
    <property type="protein sequence ID" value="AAN49705"/>
    <property type="gene ID" value="LA_2506"/>
</dbReference>
<dbReference type="GeneID" id="61144763"/>
<dbReference type="KEGG" id="lil:LA_2506"/>
<dbReference type="PATRIC" id="fig|189518.3.peg.2488"/>
<dbReference type="HOGENOM" id="CLU_048577_4_0_12"/>
<dbReference type="InParanoid" id="P59119"/>
<dbReference type="OrthoDB" id="9781903at2"/>
<dbReference type="UniPathway" id="UPA00031">
    <property type="reaction ID" value="UER00010"/>
</dbReference>
<dbReference type="Proteomes" id="UP000001408">
    <property type="component" value="Chromosome I"/>
</dbReference>
<dbReference type="GO" id="GO:0005737">
    <property type="term" value="C:cytoplasm"/>
    <property type="evidence" value="ECO:0007669"/>
    <property type="project" value="UniProtKB-SubCell"/>
</dbReference>
<dbReference type="GO" id="GO:0000107">
    <property type="term" value="F:imidazoleglycerol-phosphate synthase activity"/>
    <property type="evidence" value="ECO:0000318"/>
    <property type="project" value="GO_Central"/>
</dbReference>
<dbReference type="GO" id="GO:0016829">
    <property type="term" value="F:lyase activity"/>
    <property type="evidence" value="ECO:0007669"/>
    <property type="project" value="UniProtKB-KW"/>
</dbReference>
<dbReference type="GO" id="GO:0000105">
    <property type="term" value="P:L-histidine biosynthetic process"/>
    <property type="evidence" value="ECO:0007669"/>
    <property type="project" value="UniProtKB-UniRule"/>
</dbReference>
<dbReference type="CDD" id="cd04731">
    <property type="entry name" value="HisF"/>
    <property type="match status" value="1"/>
</dbReference>
<dbReference type="FunFam" id="3.20.20.70:FF:000006">
    <property type="entry name" value="Imidazole glycerol phosphate synthase subunit HisF"/>
    <property type="match status" value="1"/>
</dbReference>
<dbReference type="Gene3D" id="3.20.20.70">
    <property type="entry name" value="Aldolase class I"/>
    <property type="match status" value="1"/>
</dbReference>
<dbReference type="HAMAP" id="MF_01013">
    <property type="entry name" value="HisF"/>
    <property type="match status" value="1"/>
</dbReference>
<dbReference type="InterPro" id="IPR013785">
    <property type="entry name" value="Aldolase_TIM"/>
</dbReference>
<dbReference type="InterPro" id="IPR006062">
    <property type="entry name" value="His_biosynth"/>
</dbReference>
<dbReference type="InterPro" id="IPR004651">
    <property type="entry name" value="HisF"/>
</dbReference>
<dbReference type="InterPro" id="IPR050064">
    <property type="entry name" value="IGPS_HisA/HisF"/>
</dbReference>
<dbReference type="InterPro" id="IPR011060">
    <property type="entry name" value="RibuloseP-bd_barrel"/>
</dbReference>
<dbReference type="NCBIfam" id="TIGR00735">
    <property type="entry name" value="hisF"/>
    <property type="match status" value="1"/>
</dbReference>
<dbReference type="PANTHER" id="PTHR21235:SF2">
    <property type="entry name" value="IMIDAZOLE GLYCEROL PHOSPHATE SYNTHASE HISHF"/>
    <property type="match status" value="1"/>
</dbReference>
<dbReference type="PANTHER" id="PTHR21235">
    <property type="entry name" value="IMIDAZOLE GLYCEROL PHOSPHATE SYNTHASE SUBUNIT HISF/H IGP SYNTHASE SUBUNIT HISF/H"/>
    <property type="match status" value="1"/>
</dbReference>
<dbReference type="Pfam" id="PF00977">
    <property type="entry name" value="His_biosynth"/>
    <property type="match status" value="1"/>
</dbReference>
<dbReference type="SUPFAM" id="SSF51366">
    <property type="entry name" value="Ribulose-phoshate binding barrel"/>
    <property type="match status" value="1"/>
</dbReference>
<name>HIS6_LEPIN</name>
<feature type="chain" id="PRO_0000142174" description="Imidazole glycerol phosphate synthase subunit HisF">
    <location>
        <begin position="1"/>
        <end position="256"/>
    </location>
</feature>
<feature type="active site" evidence="2">
    <location>
        <position position="13"/>
    </location>
</feature>
<feature type="active site" evidence="2">
    <location>
        <position position="132"/>
    </location>
</feature>
<reference key="1">
    <citation type="journal article" date="2003" name="Nature">
        <title>Unique physiological and pathogenic features of Leptospira interrogans revealed by whole-genome sequencing.</title>
        <authorList>
            <person name="Ren S.-X."/>
            <person name="Fu G."/>
            <person name="Jiang X.-G."/>
            <person name="Zeng R."/>
            <person name="Miao Y.-G."/>
            <person name="Xu H."/>
            <person name="Zhang Y.-X."/>
            <person name="Xiong H."/>
            <person name="Lu G."/>
            <person name="Lu L.-F."/>
            <person name="Jiang H.-Q."/>
            <person name="Jia J."/>
            <person name="Tu Y.-F."/>
            <person name="Jiang J.-X."/>
            <person name="Gu W.-Y."/>
            <person name="Zhang Y.-Q."/>
            <person name="Cai Z."/>
            <person name="Sheng H.-H."/>
            <person name="Yin H.-F."/>
            <person name="Zhang Y."/>
            <person name="Zhu G.-F."/>
            <person name="Wan M."/>
            <person name="Huang H.-L."/>
            <person name="Qian Z."/>
            <person name="Wang S.-Y."/>
            <person name="Ma W."/>
            <person name="Yao Z.-J."/>
            <person name="Shen Y."/>
            <person name="Qiang B.-Q."/>
            <person name="Xia Q.-C."/>
            <person name="Guo X.-K."/>
            <person name="Danchin A."/>
            <person name="Saint Girons I."/>
            <person name="Somerville R.L."/>
            <person name="Wen Y.-M."/>
            <person name="Shi M.-H."/>
            <person name="Chen Z."/>
            <person name="Xu J.-G."/>
            <person name="Zhao G.-P."/>
        </authorList>
    </citation>
    <scope>NUCLEOTIDE SEQUENCE [LARGE SCALE GENOMIC DNA]</scope>
    <source>
        <strain>56601</strain>
    </source>
</reference>
<sequence>MSNLTARVIPCLDIKDGRVVKGVNFVNLVDAGDPVESAAIYEENLADELCFLDITASSDRREILLHLVERIAEKIFIPFTVGGGIRTVDDVKAVLEKGADKVSINTAAFQNPKLLTYSSEIYGSQCIVCAIDVKHEKERDRYEVFLHGGRTATGREALDWAQEAAEKGAGEILLTSMDRDGTRNGFDIHLLKNFSSSLGIPIIASGGAGNPEHMVEAILRGKADAVLAASIFHFGEYSIRETKKAMEEMGISVRLD</sequence>
<organism>
    <name type="scientific">Leptospira interrogans serogroup Icterohaemorrhagiae serovar Lai (strain 56601)</name>
    <dbReference type="NCBI Taxonomy" id="189518"/>
    <lineage>
        <taxon>Bacteria</taxon>
        <taxon>Pseudomonadati</taxon>
        <taxon>Spirochaetota</taxon>
        <taxon>Spirochaetia</taxon>
        <taxon>Leptospirales</taxon>
        <taxon>Leptospiraceae</taxon>
        <taxon>Leptospira</taxon>
    </lineage>
</organism>
<comment type="function">
    <text evidence="1">IGPS catalyzes the conversion of PRFAR and glutamine to IGP, AICAR and glutamate. The HisF subunit catalyzes the cyclization activity that produces IGP and AICAR from PRFAR using the ammonia provided by the HisH subunit (By similarity).</text>
</comment>
<comment type="catalytic activity">
    <reaction>
        <text>5-[(5-phospho-1-deoxy-D-ribulos-1-ylimino)methylamino]-1-(5-phospho-beta-D-ribosyl)imidazole-4-carboxamide + L-glutamine = D-erythro-1-(imidazol-4-yl)glycerol 3-phosphate + 5-amino-1-(5-phospho-beta-D-ribosyl)imidazole-4-carboxamide + L-glutamate + H(+)</text>
        <dbReference type="Rhea" id="RHEA:24793"/>
        <dbReference type="ChEBI" id="CHEBI:15378"/>
        <dbReference type="ChEBI" id="CHEBI:29985"/>
        <dbReference type="ChEBI" id="CHEBI:58278"/>
        <dbReference type="ChEBI" id="CHEBI:58359"/>
        <dbReference type="ChEBI" id="CHEBI:58475"/>
        <dbReference type="ChEBI" id="CHEBI:58525"/>
        <dbReference type="EC" id="4.3.2.10"/>
    </reaction>
</comment>
<comment type="pathway">
    <text>Amino-acid biosynthesis; L-histidine biosynthesis; L-histidine from 5-phospho-alpha-D-ribose 1-diphosphate: step 5/9.</text>
</comment>
<comment type="subunit">
    <text evidence="1">Heterodimer of HisH and HisF.</text>
</comment>
<comment type="subcellular location">
    <subcellularLocation>
        <location evidence="1">Cytoplasm</location>
    </subcellularLocation>
</comment>
<comment type="similarity">
    <text evidence="3">Belongs to the HisA/HisF family.</text>
</comment>
<proteinExistence type="inferred from homology"/>
<protein>
    <recommendedName>
        <fullName>Imidazole glycerol phosphate synthase subunit HisF</fullName>
        <ecNumber>4.3.2.10</ecNumber>
    </recommendedName>
    <alternativeName>
        <fullName>IGP synthase cyclase subunit</fullName>
    </alternativeName>
    <alternativeName>
        <fullName>IGP synthase subunit HisF</fullName>
    </alternativeName>
    <alternativeName>
        <fullName>ImGP synthase subunit HisF</fullName>
        <shortName>IGPS subunit HisF</shortName>
    </alternativeName>
</protein>
<gene>
    <name type="primary">hisF</name>
    <name type="ordered locus">LA_2506</name>
</gene>